<comment type="function">
    <text evidence="1">Catalyzes the reversible isomerization of glucose-6-phosphate to fructose-6-phosphate.</text>
</comment>
<comment type="catalytic activity">
    <reaction evidence="1">
        <text>alpha-D-glucose 6-phosphate = beta-D-fructose 6-phosphate</text>
        <dbReference type="Rhea" id="RHEA:11816"/>
        <dbReference type="ChEBI" id="CHEBI:57634"/>
        <dbReference type="ChEBI" id="CHEBI:58225"/>
        <dbReference type="EC" id="5.3.1.9"/>
    </reaction>
</comment>
<comment type="pathway">
    <text evidence="1">Carbohydrate biosynthesis; gluconeogenesis.</text>
</comment>
<comment type="pathway">
    <text evidence="1">Carbohydrate degradation; glycolysis; D-glyceraldehyde 3-phosphate and glycerone phosphate from D-glucose: step 2/4.</text>
</comment>
<comment type="subcellular location">
    <subcellularLocation>
        <location evidence="1">Cytoplasm</location>
    </subcellularLocation>
</comment>
<comment type="similarity">
    <text evidence="1">Belongs to the GPI family.</text>
</comment>
<comment type="sequence caution" evidence="2">
    <conflict type="erroneous initiation">
        <sequence resource="EMBL-CDS" id="CAI36606"/>
    </conflict>
</comment>
<name>G6PI_CORJK</name>
<keyword id="KW-0963">Cytoplasm</keyword>
<keyword id="KW-0312">Gluconeogenesis</keyword>
<keyword id="KW-0324">Glycolysis</keyword>
<keyword id="KW-0413">Isomerase</keyword>
<keyword id="KW-1185">Reference proteome</keyword>
<proteinExistence type="inferred from homology"/>
<dbReference type="EC" id="5.3.1.9" evidence="1"/>
<dbReference type="EMBL" id="CR931997">
    <property type="protein sequence ID" value="CAI36606.1"/>
    <property type="status" value="ALT_INIT"/>
    <property type="molecule type" value="Genomic_DNA"/>
</dbReference>
<dbReference type="RefSeq" id="WP_041626078.1">
    <property type="nucleotide sequence ID" value="NC_007164.1"/>
</dbReference>
<dbReference type="SMR" id="Q4JX51"/>
<dbReference type="STRING" id="306537.jk0449"/>
<dbReference type="KEGG" id="cjk:jk0449"/>
<dbReference type="PATRIC" id="fig|306537.10.peg.461"/>
<dbReference type="eggNOG" id="COG0166">
    <property type="taxonomic scope" value="Bacteria"/>
</dbReference>
<dbReference type="HOGENOM" id="CLU_017947_3_1_11"/>
<dbReference type="OrthoDB" id="140919at2"/>
<dbReference type="UniPathway" id="UPA00109">
    <property type="reaction ID" value="UER00181"/>
</dbReference>
<dbReference type="UniPathway" id="UPA00138"/>
<dbReference type="Proteomes" id="UP000000545">
    <property type="component" value="Chromosome"/>
</dbReference>
<dbReference type="GO" id="GO:0005829">
    <property type="term" value="C:cytosol"/>
    <property type="evidence" value="ECO:0007669"/>
    <property type="project" value="TreeGrafter"/>
</dbReference>
<dbReference type="GO" id="GO:0097367">
    <property type="term" value="F:carbohydrate derivative binding"/>
    <property type="evidence" value="ECO:0007669"/>
    <property type="project" value="InterPro"/>
</dbReference>
<dbReference type="GO" id="GO:0004347">
    <property type="term" value="F:glucose-6-phosphate isomerase activity"/>
    <property type="evidence" value="ECO:0007669"/>
    <property type="project" value="UniProtKB-UniRule"/>
</dbReference>
<dbReference type="GO" id="GO:0048029">
    <property type="term" value="F:monosaccharide binding"/>
    <property type="evidence" value="ECO:0007669"/>
    <property type="project" value="TreeGrafter"/>
</dbReference>
<dbReference type="GO" id="GO:0006094">
    <property type="term" value="P:gluconeogenesis"/>
    <property type="evidence" value="ECO:0007669"/>
    <property type="project" value="UniProtKB-UniRule"/>
</dbReference>
<dbReference type="GO" id="GO:0051156">
    <property type="term" value="P:glucose 6-phosphate metabolic process"/>
    <property type="evidence" value="ECO:0007669"/>
    <property type="project" value="TreeGrafter"/>
</dbReference>
<dbReference type="GO" id="GO:0006096">
    <property type="term" value="P:glycolytic process"/>
    <property type="evidence" value="ECO:0007669"/>
    <property type="project" value="UniProtKB-UniRule"/>
</dbReference>
<dbReference type="CDD" id="cd05015">
    <property type="entry name" value="SIS_PGI_1"/>
    <property type="match status" value="1"/>
</dbReference>
<dbReference type="CDD" id="cd05016">
    <property type="entry name" value="SIS_PGI_2"/>
    <property type="match status" value="1"/>
</dbReference>
<dbReference type="Gene3D" id="1.10.1390.10">
    <property type="match status" value="1"/>
</dbReference>
<dbReference type="Gene3D" id="3.40.50.10490">
    <property type="entry name" value="Glucose-6-phosphate isomerase like protein, domain 1"/>
    <property type="match status" value="2"/>
</dbReference>
<dbReference type="HAMAP" id="MF_00473">
    <property type="entry name" value="G6P_isomerase"/>
    <property type="match status" value="1"/>
</dbReference>
<dbReference type="InterPro" id="IPR001672">
    <property type="entry name" value="G6P_Isomerase"/>
</dbReference>
<dbReference type="InterPro" id="IPR023096">
    <property type="entry name" value="G6P_Isomerase_C"/>
</dbReference>
<dbReference type="InterPro" id="IPR018189">
    <property type="entry name" value="Phosphoglucose_isomerase_CS"/>
</dbReference>
<dbReference type="InterPro" id="IPR046348">
    <property type="entry name" value="SIS_dom_sf"/>
</dbReference>
<dbReference type="InterPro" id="IPR035476">
    <property type="entry name" value="SIS_PGI_1"/>
</dbReference>
<dbReference type="InterPro" id="IPR035482">
    <property type="entry name" value="SIS_PGI_2"/>
</dbReference>
<dbReference type="NCBIfam" id="NF001211">
    <property type="entry name" value="PRK00179.1"/>
    <property type="match status" value="1"/>
</dbReference>
<dbReference type="PANTHER" id="PTHR11469">
    <property type="entry name" value="GLUCOSE-6-PHOSPHATE ISOMERASE"/>
    <property type="match status" value="1"/>
</dbReference>
<dbReference type="PANTHER" id="PTHR11469:SF1">
    <property type="entry name" value="GLUCOSE-6-PHOSPHATE ISOMERASE"/>
    <property type="match status" value="1"/>
</dbReference>
<dbReference type="Pfam" id="PF00342">
    <property type="entry name" value="PGI"/>
    <property type="match status" value="1"/>
</dbReference>
<dbReference type="PRINTS" id="PR00662">
    <property type="entry name" value="G6PISOMERASE"/>
</dbReference>
<dbReference type="SUPFAM" id="SSF53697">
    <property type="entry name" value="SIS domain"/>
    <property type="match status" value="1"/>
</dbReference>
<dbReference type="PROSITE" id="PS00765">
    <property type="entry name" value="P_GLUCOSE_ISOMERASE_1"/>
    <property type="match status" value="1"/>
</dbReference>
<dbReference type="PROSITE" id="PS00174">
    <property type="entry name" value="P_GLUCOSE_ISOMERASE_2"/>
    <property type="match status" value="1"/>
</dbReference>
<dbReference type="PROSITE" id="PS51463">
    <property type="entry name" value="P_GLUCOSE_ISOMERASE_3"/>
    <property type="match status" value="1"/>
</dbReference>
<feature type="chain" id="PRO_0000180634" description="Glucose-6-phosphate isomerase">
    <location>
        <begin position="1"/>
        <end position="565"/>
    </location>
</feature>
<feature type="active site" description="Proton donor" evidence="1">
    <location>
        <position position="373"/>
    </location>
</feature>
<feature type="active site" evidence="1">
    <location>
        <position position="404"/>
    </location>
</feature>
<feature type="active site" evidence="1">
    <location>
        <position position="530"/>
    </location>
</feature>
<evidence type="ECO:0000255" key="1">
    <source>
        <dbReference type="HAMAP-Rule" id="MF_00473"/>
    </source>
</evidence>
<evidence type="ECO:0000305" key="2"/>
<gene>
    <name evidence="1" type="primary">pgi</name>
    <name type="ordered locus">jk0449</name>
</gene>
<protein>
    <recommendedName>
        <fullName evidence="1">Glucose-6-phosphate isomerase</fullName>
        <shortName evidence="1">GPI</shortName>
        <ecNumber evidence="1">5.3.1.9</ecNumber>
    </recommendedName>
    <alternativeName>
        <fullName evidence="1">Phosphoglucose isomerase</fullName>
        <shortName evidence="1">PGI</shortName>
    </alternativeName>
    <alternativeName>
        <fullName evidence="1">Phosphohexose isomerase</fullName>
        <shortName evidence="1">PHI</shortName>
    </alternativeName>
</protein>
<organism>
    <name type="scientific">Corynebacterium jeikeium (strain K411)</name>
    <dbReference type="NCBI Taxonomy" id="306537"/>
    <lineage>
        <taxon>Bacteria</taxon>
        <taxon>Bacillati</taxon>
        <taxon>Actinomycetota</taxon>
        <taxon>Actinomycetes</taxon>
        <taxon>Mycobacteriales</taxon>
        <taxon>Corynebacteriaceae</taxon>
        <taxon>Corynebacterium</taxon>
    </lineage>
</organism>
<reference key="1">
    <citation type="journal article" date="2005" name="J. Bacteriol.">
        <title>Complete genome sequence and analysis of the multiresistant nosocomial pathogen Corynebacterium jeikeium K411, a lipid-requiring bacterium of the human skin flora.</title>
        <authorList>
            <person name="Tauch A."/>
            <person name="Kaiser O."/>
            <person name="Hain T."/>
            <person name="Goesmann A."/>
            <person name="Weisshaar B."/>
            <person name="Albersmeier A."/>
            <person name="Bekel T."/>
            <person name="Bischoff N."/>
            <person name="Brune I."/>
            <person name="Chakraborty T."/>
            <person name="Kalinowski J."/>
            <person name="Meyer F."/>
            <person name="Rupp O."/>
            <person name="Schneiker S."/>
            <person name="Viehoever P."/>
            <person name="Puehler A."/>
        </authorList>
    </citation>
    <scope>NUCLEOTIDE SEQUENCE [LARGE SCALE GENOMIC DNA]</scope>
    <source>
        <strain>K411</strain>
    </source>
</reference>
<accession>Q4JX51</accession>
<sequence length="565" mass="62145">MPQQRETAHKTREWKKLTEYADATRGTQLRELFTEQPGRSSDMTYNVGPLHVDLSKNLIDERGLRLLLDLARARGLEDYRSAMFDGEHINTTEDRAVLHTALRIPVDREFSIPVGADETQDVAADVHAVLGRMRDFAKALRSGSWQGVTGHTIKHVVNIGIGGSDLGPAMAAQALRPYMTAGITPHFISNIDPADVAGTLDGLDAESTLFVIASKTFTTSETLANAHAARRWLLRNLADAGVDVEGDDAIRDITAKHFVAVSTAAEKVQEFGIDTKNMFEFWDWVGGRYSVDSAIGLSLMAAIGPQDFMRFLEGFHEVDDHFRTEPLEMNIPVLMGMLGVWYTDFLGAQSHAVLPYSEDMARFPAYLQQLTMESNGKSVQLDGTPVEVPSGEIYWGEPGTNGQHAFFQLLHQGTHLVPADFIGFVNPHDDAVAADGTTSMHDMLMSNFFAQTRVLAFGKNAEELKEEGVAPELIPHKVMPGNRPTTTILANKLTPKTLGALIALYEHIVFVQGVIWGINSFDQWGVELGKKQANALLPAVTGAERSDAGDSSTDDLIAYYRQHRD</sequence>